<dbReference type="EMBL" id="CP000102">
    <property type="protein sequence ID" value="ABC57018.1"/>
    <property type="molecule type" value="Genomic_DNA"/>
</dbReference>
<dbReference type="RefSeq" id="WP_011406218.1">
    <property type="nucleotide sequence ID" value="NC_007681.1"/>
</dbReference>
<dbReference type="SMR" id="Q2NGN5"/>
<dbReference type="STRING" id="339860.Msp_0620"/>
<dbReference type="KEGG" id="mst:Msp_0620"/>
<dbReference type="eggNOG" id="arCOG04183">
    <property type="taxonomic scope" value="Archaea"/>
</dbReference>
<dbReference type="HOGENOM" id="CLU_179743_2_0_2"/>
<dbReference type="OrthoDB" id="25142at2157"/>
<dbReference type="Proteomes" id="UP000001931">
    <property type="component" value="Chromosome"/>
</dbReference>
<dbReference type="GO" id="GO:1990904">
    <property type="term" value="C:ribonucleoprotein complex"/>
    <property type="evidence" value="ECO:0007669"/>
    <property type="project" value="UniProtKB-KW"/>
</dbReference>
<dbReference type="GO" id="GO:0005840">
    <property type="term" value="C:ribosome"/>
    <property type="evidence" value="ECO:0007669"/>
    <property type="project" value="UniProtKB-KW"/>
</dbReference>
<dbReference type="GO" id="GO:0003735">
    <property type="term" value="F:structural constituent of ribosome"/>
    <property type="evidence" value="ECO:0007669"/>
    <property type="project" value="InterPro"/>
</dbReference>
<dbReference type="GO" id="GO:0008270">
    <property type="term" value="F:zinc ion binding"/>
    <property type="evidence" value="ECO:0007669"/>
    <property type="project" value="UniProtKB-UniRule"/>
</dbReference>
<dbReference type="GO" id="GO:0006412">
    <property type="term" value="P:translation"/>
    <property type="evidence" value="ECO:0007669"/>
    <property type="project" value="UniProtKB-UniRule"/>
</dbReference>
<dbReference type="Gene3D" id="6.20.50.180">
    <property type="match status" value="1"/>
</dbReference>
<dbReference type="HAMAP" id="MF_00777">
    <property type="entry name" value="Ribosomal_eS31"/>
    <property type="match status" value="1"/>
</dbReference>
<dbReference type="InterPro" id="IPR002906">
    <property type="entry name" value="Ribosomal_eS31"/>
</dbReference>
<dbReference type="InterPro" id="IPR022845">
    <property type="entry name" value="Ribosomal_eS31_arc"/>
</dbReference>
<dbReference type="InterPro" id="IPR011332">
    <property type="entry name" value="Ribosomal_zn-bd"/>
</dbReference>
<dbReference type="NCBIfam" id="NF001669">
    <property type="entry name" value="PRK00432.1"/>
    <property type="match status" value="1"/>
</dbReference>
<dbReference type="Pfam" id="PF01599">
    <property type="entry name" value="Ribosomal_S27"/>
    <property type="match status" value="1"/>
</dbReference>
<dbReference type="SMART" id="SM01402">
    <property type="entry name" value="Ribosomal_S27"/>
    <property type="match status" value="1"/>
</dbReference>
<dbReference type="SUPFAM" id="SSF57829">
    <property type="entry name" value="Zn-binding ribosomal proteins"/>
    <property type="match status" value="1"/>
</dbReference>
<protein>
    <recommendedName>
        <fullName evidence="1">Small ribosomal subunit protein eS31</fullName>
    </recommendedName>
    <alternativeName>
        <fullName evidence="2">30S ribosomal protein S27ae</fullName>
    </alternativeName>
</protein>
<comment type="cofactor">
    <cofactor evidence="1">
        <name>Zn(2+)</name>
        <dbReference type="ChEBI" id="CHEBI:29105"/>
    </cofactor>
    <text evidence="1">Binds 1 zinc ion per subunit.</text>
</comment>
<comment type="subunit">
    <text evidence="1">Part of the 30S ribosomal subunit.</text>
</comment>
<comment type="similarity">
    <text evidence="1">Belongs to the eukaryotic ribosomal protein eS31 family.</text>
</comment>
<gene>
    <name evidence="1" type="primary">rps27ae</name>
    <name type="ordered locus">Msp_0620</name>
</gene>
<sequence>MSKKYELYEVKDGKIVRKNPECVRCSHGIFMADHGDRYACGRCGYTQWKNE</sequence>
<evidence type="ECO:0000255" key="1">
    <source>
        <dbReference type="HAMAP-Rule" id="MF_00777"/>
    </source>
</evidence>
<evidence type="ECO:0000305" key="2"/>
<feature type="chain" id="PRO_1000046816" description="Small ribosomal subunit protein eS31">
    <location>
        <begin position="1"/>
        <end position="51"/>
    </location>
</feature>
<feature type="zinc finger region" description="C4-type" evidence="1">
    <location>
        <begin position="22"/>
        <end position="43"/>
    </location>
</feature>
<feature type="binding site" evidence="1">
    <location>
        <position position="22"/>
    </location>
    <ligand>
        <name>Zn(2+)</name>
        <dbReference type="ChEBI" id="CHEBI:29105"/>
    </ligand>
</feature>
<feature type="binding site" evidence="1">
    <location>
        <position position="25"/>
    </location>
    <ligand>
        <name>Zn(2+)</name>
        <dbReference type="ChEBI" id="CHEBI:29105"/>
    </ligand>
</feature>
<feature type="binding site" evidence="1">
    <location>
        <position position="40"/>
    </location>
    <ligand>
        <name>Zn(2+)</name>
        <dbReference type="ChEBI" id="CHEBI:29105"/>
    </ligand>
</feature>
<feature type="binding site" evidence="1">
    <location>
        <position position="43"/>
    </location>
    <ligand>
        <name>Zn(2+)</name>
        <dbReference type="ChEBI" id="CHEBI:29105"/>
    </ligand>
</feature>
<proteinExistence type="inferred from homology"/>
<name>RS27A_METST</name>
<accession>Q2NGN5</accession>
<reference key="1">
    <citation type="journal article" date="2006" name="J. Bacteriol.">
        <title>The genome sequence of Methanosphaera stadtmanae reveals why this human intestinal archaeon is restricted to methanol and H2 for methane formation and ATP synthesis.</title>
        <authorList>
            <person name="Fricke W.F."/>
            <person name="Seedorf H."/>
            <person name="Henne A."/>
            <person name="Kruer M."/>
            <person name="Liesegang H."/>
            <person name="Hedderich R."/>
            <person name="Gottschalk G."/>
            <person name="Thauer R.K."/>
        </authorList>
    </citation>
    <scope>NUCLEOTIDE SEQUENCE [LARGE SCALE GENOMIC DNA]</scope>
    <source>
        <strain>ATCC 43021 / DSM 3091 / JCM 11832 / MCB-3</strain>
    </source>
</reference>
<keyword id="KW-0479">Metal-binding</keyword>
<keyword id="KW-1185">Reference proteome</keyword>
<keyword id="KW-0687">Ribonucleoprotein</keyword>
<keyword id="KW-0689">Ribosomal protein</keyword>
<keyword id="KW-0862">Zinc</keyword>
<keyword id="KW-0863">Zinc-finger</keyword>
<organism>
    <name type="scientific">Methanosphaera stadtmanae (strain ATCC 43021 / DSM 3091 / JCM 11832 / MCB-3)</name>
    <dbReference type="NCBI Taxonomy" id="339860"/>
    <lineage>
        <taxon>Archaea</taxon>
        <taxon>Methanobacteriati</taxon>
        <taxon>Methanobacteriota</taxon>
        <taxon>Methanomada group</taxon>
        <taxon>Methanobacteria</taxon>
        <taxon>Methanobacteriales</taxon>
        <taxon>Methanobacteriaceae</taxon>
        <taxon>Methanosphaera</taxon>
    </lineage>
</organism>